<comment type="similarity">
    <text evidence="1">Belongs to the PPR family. PCMP-E subfamily.</text>
</comment>
<comment type="sequence caution" evidence="1">
    <conflict type="erroneous gene model prediction">
        <sequence resource="EMBL-CDS" id="CAA16561"/>
    </conflict>
    <text>The predicted gene has been split into 2 genes: At4g22758 and At4g22760.</text>
</comment>
<comment type="sequence caution" evidence="1">
    <conflict type="erroneous gene model prediction">
        <sequence resource="EMBL-CDS" id="CAB79231"/>
    </conflict>
    <text>The predicted gene has been split into 2 genes: At4g22758 and At4g22760.</text>
</comment>
<comment type="online information" name="Pentatricopeptide repeat proteins">
    <link uri="https://ppr.plantenergy.uwa.edu.au"/>
</comment>
<sequence length="578" mass="64586">MLDSKLRFFLQRCVVLEQAKQVHAQLVVNRYNHLEPILVHQTLHFTKEFSRNIVTYVKRILKGFNGHDSFSWGCLVRFLSQHRKFKETVDVYIDMHNSGIPPSSHAVTSVLRACGKMENMVDGKPIHAQALKNGLCGCVYVQTGLVGLYSRLGYIELAKKAFDDIAEKNTVSWNSLLHGYLESGELDEARRVFDKIPEKDAVSWNLIISSYAKKGDMGNACSLFSAMPLKSPASWNILIGGYVNCREMKLARTYFDAMPQKNGVSWITMISGYTKLGDVQSAEELFRLMSKKDKLVYDAMIACYTQNGKPKDALKLFAQMLERNSYIQPDEITLSSVVSANSQLGNTSFGTWVESYITEHGIKIDDLLSTSLIDLYMKGGDFAKAFKMFSNLNKKDTVSYSAMIMGCGINGMATEANSLFTAMIEKKIPPNVVTFTGLLSAYSHSGLVQEGYKCFNSMKDHNLEPSADHYGIMVDMLGRAGRLEEAYELIKSMPMQPNAGVWGALLLASGLHNNVEFGEIACSHCVKLETDPTGYLSHLAMIYSSVGRWDDARTVRDSIKEKKLCKTLGCSWVEGSYH</sequence>
<evidence type="ECO:0000305" key="1"/>
<reference key="1">
    <citation type="journal article" date="1999" name="Nature">
        <title>Sequence and analysis of chromosome 4 of the plant Arabidopsis thaliana.</title>
        <authorList>
            <person name="Mayer K.F.X."/>
            <person name="Schueller C."/>
            <person name="Wambutt R."/>
            <person name="Murphy G."/>
            <person name="Volckaert G."/>
            <person name="Pohl T."/>
            <person name="Duesterhoeft A."/>
            <person name="Stiekema W."/>
            <person name="Entian K.-D."/>
            <person name="Terryn N."/>
            <person name="Harris B."/>
            <person name="Ansorge W."/>
            <person name="Brandt P."/>
            <person name="Grivell L.A."/>
            <person name="Rieger M."/>
            <person name="Weichselgartner M."/>
            <person name="de Simone V."/>
            <person name="Obermaier B."/>
            <person name="Mache R."/>
            <person name="Mueller M."/>
            <person name="Kreis M."/>
            <person name="Delseny M."/>
            <person name="Puigdomenech P."/>
            <person name="Watson M."/>
            <person name="Schmidtheini T."/>
            <person name="Reichert B."/>
            <person name="Portetelle D."/>
            <person name="Perez-Alonso M."/>
            <person name="Boutry M."/>
            <person name="Bancroft I."/>
            <person name="Vos P."/>
            <person name="Hoheisel J."/>
            <person name="Zimmermann W."/>
            <person name="Wedler H."/>
            <person name="Ridley P."/>
            <person name="Langham S.-A."/>
            <person name="McCullagh B."/>
            <person name="Bilham L."/>
            <person name="Robben J."/>
            <person name="van der Schueren J."/>
            <person name="Grymonprez B."/>
            <person name="Chuang Y.-J."/>
            <person name="Vandenbussche F."/>
            <person name="Braeken M."/>
            <person name="Weltjens I."/>
            <person name="Voet M."/>
            <person name="Bastiaens I."/>
            <person name="Aert R."/>
            <person name="Defoor E."/>
            <person name="Weitzenegger T."/>
            <person name="Bothe G."/>
            <person name="Ramsperger U."/>
            <person name="Hilbert H."/>
            <person name="Braun M."/>
            <person name="Holzer E."/>
            <person name="Brandt A."/>
            <person name="Peters S."/>
            <person name="van Staveren M."/>
            <person name="Dirkse W."/>
            <person name="Mooijman P."/>
            <person name="Klein Lankhorst R."/>
            <person name="Rose M."/>
            <person name="Hauf J."/>
            <person name="Koetter P."/>
            <person name="Berneiser S."/>
            <person name="Hempel S."/>
            <person name="Feldpausch M."/>
            <person name="Lamberth S."/>
            <person name="Van den Daele H."/>
            <person name="De Keyser A."/>
            <person name="Buysshaert C."/>
            <person name="Gielen J."/>
            <person name="Villarroel R."/>
            <person name="De Clercq R."/>
            <person name="van Montagu M."/>
            <person name="Rogers J."/>
            <person name="Cronin A."/>
            <person name="Quail M.A."/>
            <person name="Bray-Allen S."/>
            <person name="Clark L."/>
            <person name="Doggett J."/>
            <person name="Hall S."/>
            <person name="Kay M."/>
            <person name="Lennard N."/>
            <person name="McLay K."/>
            <person name="Mayes R."/>
            <person name="Pettett A."/>
            <person name="Rajandream M.A."/>
            <person name="Lyne M."/>
            <person name="Benes V."/>
            <person name="Rechmann S."/>
            <person name="Borkova D."/>
            <person name="Bloecker H."/>
            <person name="Scharfe M."/>
            <person name="Grimm M."/>
            <person name="Loehnert T.-H."/>
            <person name="Dose S."/>
            <person name="de Haan M."/>
            <person name="Maarse A.C."/>
            <person name="Schaefer M."/>
            <person name="Mueller-Auer S."/>
            <person name="Gabel C."/>
            <person name="Fuchs M."/>
            <person name="Fartmann B."/>
            <person name="Granderath K."/>
            <person name="Dauner D."/>
            <person name="Herzl A."/>
            <person name="Neumann S."/>
            <person name="Argiriou A."/>
            <person name="Vitale D."/>
            <person name="Liguori R."/>
            <person name="Piravandi E."/>
            <person name="Massenet O."/>
            <person name="Quigley F."/>
            <person name="Clabauld G."/>
            <person name="Muendlein A."/>
            <person name="Felber R."/>
            <person name="Schnabl S."/>
            <person name="Hiller R."/>
            <person name="Schmidt W."/>
            <person name="Lecharny A."/>
            <person name="Aubourg S."/>
            <person name="Chefdor F."/>
            <person name="Cooke R."/>
            <person name="Berger C."/>
            <person name="Monfort A."/>
            <person name="Casacuberta E."/>
            <person name="Gibbons T."/>
            <person name="Weber N."/>
            <person name="Vandenbol M."/>
            <person name="Bargues M."/>
            <person name="Terol J."/>
            <person name="Torres A."/>
            <person name="Perez-Perez A."/>
            <person name="Purnelle B."/>
            <person name="Bent E."/>
            <person name="Johnson S."/>
            <person name="Tacon D."/>
            <person name="Jesse T."/>
            <person name="Heijnen L."/>
            <person name="Schwarz S."/>
            <person name="Scholler P."/>
            <person name="Heber S."/>
            <person name="Francs P."/>
            <person name="Bielke C."/>
            <person name="Frishman D."/>
            <person name="Haase D."/>
            <person name="Lemcke K."/>
            <person name="Mewes H.-W."/>
            <person name="Stocker S."/>
            <person name="Zaccaria P."/>
            <person name="Bevan M."/>
            <person name="Wilson R.K."/>
            <person name="de la Bastide M."/>
            <person name="Habermann K."/>
            <person name="Parnell L."/>
            <person name="Dedhia N."/>
            <person name="Gnoj L."/>
            <person name="Schutz K."/>
            <person name="Huang E."/>
            <person name="Spiegel L."/>
            <person name="Sekhon M."/>
            <person name="Murray J."/>
            <person name="Sheet P."/>
            <person name="Cordes M."/>
            <person name="Abu-Threideh J."/>
            <person name="Stoneking T."/>
            <person name="Kalicki J."/>
            <person name="Graves T."/>
            <person name="Harmon G."/>
            <person name="Edwards J."/>
            <person name="Latreille P."/>
            <person name="Courtney L."/>
            <person name="Cloud J."/>
            <person name="Abbott A."/>
            <person name="Scott K."/>
            <person name="Johnson D."/>
            <person name="Minx P."/>
            <person name="Bentley D."/>
            <person name="Fulton B."/>
            <person name="Miller N."/>
            <person name="Greco T."/>
            <person name="Kemp K."/>
            <person name="Kramer J."/>
            <person name="Fulton L."/>
            <person name="Mardis E."/>
            <person name="Dante M."/>
            <person name="Pepin K."/>
            <person name="Hillier L.W."/>
            <person name="Nelson J."/>
            <person name="Spieth J."/>
            <person name="Ryan E."/>
            <person name="Andrews S."/>
            <person name="Geisel C."/>
            <person name="Layman D."/>
            <person name="Du H."/>
            <person name="Ali J."/>
            <person name="Berghoff A."/>
            <person name="Jones K."/>
            <person name="Drone K."/>
            <person name="Cotton M."/>
            <person name="Joshu C."/>
            <person name="Antonoiu B."/>
            <person name="Zidanic M."/>
            <person name="Strong C."/>
            <person name="Sun H."/>
            <person name="Lamar B."/>
            <person name="Yordan C."/>
            <person name="Ma P."/>
            <person name="Zhong J."/>
            <person name="Preston R."/>
            <person name="Vil D."/>
            <person name="Shekher M."/>
            <person name="Matero A."/>
            <person name="Shah R."/>
            <person name="Swaby I.K."/>
            <person name="O'Shaughnessy A."/>
            <person name="Rodriguez M."/>
            <person name="Hoffman J."/>
            <person name="Till S."/>
            <person name="Granat S."/>
            <person name="Shohdy N."/>
            <person name="Hasegawa A."/>
            <person name="Hameed A."/>
            <person name="Lodhi M."/>
            <person name="Johnson A."/>
            <person name="Chen E."/>
            <person name="Marra M.A."/>
            <person name="Martienssen R."/>
            <person name="McCombie W.R."/>
        </authorList>
    </citation>
    <scope>NUCLEOTIDE SEQUENCE [LARGE SCALE GENOMIC DNA]</scope>
    <source>
        <strain>cv. Columbia</strain>
    </source>
</reference>
<reference key="2">
    <citation type="journal article" date="2017" name="Plant J.">
        <title>Araport11: a complete reannotation of the Arabidopsis thaliana reference genome.</title>
        <authorList>
            <person name="Cheng C.Y."/>
            <person name="Krishnakumar V."/>
            <person name="Chan A.P."/>
            <person name="Thibaud-Nissen F."/>
            <person name="Schobel S."/>
            <person name="Town C.D."/>
        </authorList>
    </citation>
    <scope>GENOME REANNOTATION</scope>
    <source>
        <strain>cv. Columbia</strain>
    </source>
</reference>
<reference key="3">
    <citation type="journal article" date="2000" name="Plant Mol. Biol.">
        <title>In Arabidopsis thaliana, 1% of the genome codes for a novel protein family unique to plants.</title>
        <authorList>
            <person name="Aubourg S."/>
            <person name="Boudet N."/>
            <person name="Kreis M."/>
            <person name="Lecharny A."/>
        </authorList>
    </citation>
    <scope>GENE FAMILY</scope>
</reference>
<reference key="4">
    <citation type="journal article" date="2004" name="Plant Cell">
        <title>Genome-wide analysis of Arabidopsis pentatricopeptide repeat proteins reveals their essential role in organelle biogenesis.</title>
        <authorList>
            <person name="Lurin C."/>
            <person name="Andres C."/>
            <person name="Aubourg S."/>
            <person name="Bellaoui M."/>
            <person name="Bitton F."/>
            <person name="Bruyere C."/>
            <person name="Caboche M."/>
            <person name="Debast C."/>
            <person name="Gualberto J."/>
            <person name="Hoffmann B."/>
            <person name="Lecharny A."/>
            <person name="Le Ret M."/>
            <person name="Martin-Magniette M.-L."/>
            <person name="Mireau H."/>
            <person name="Peeters N."/>
            <person name="Renou J.-P."/>
            <person name="Szurek B."/>
            <person name="Taconnat L."/>
            <person name="Small I."/>
        </authorList>
    </citation>
    <scope>GENE FAMILY</scope>
</reference>
<feature type="chain" id="PRO_0000363453" description="Pentatricopeptide repeat-containing protein At4g22760">
    <location>
        <begin position="1"/>
        <end position="578"/>
    </location>
</feature>
<feature type="repeat" description="PPR 1">
    <location>
        <begin position="68"/>
        <end position="102"/>
    </location>
</feature>
<feature type="repeat" description="PPR 2">
    <location>
        <begin position="103"/>
        <end position="137"/>
    </location>
</feature>
<feature type="repeat" description="PPR 3">
    <location>
        <begin position="138"/>
        <end position="168"/>
    </location>
</feature>
<feature type="repeat" description="PPR 4">
    <location>
        <begin position="169"/>
        <end position="203"/>
    </location>
</feature>
<feature type="repeat" description="PPR 5">
    <location>
        <begin position="204"/>
        <end position="230"/>
    </location>
</feature>
<feature type="repeat" description="PPR 6">
    <location>
        <begin position="231"/>
        <end position="261"/>
    </location>
</feature>
<feature type="repeat" description="PPR 7">
    <location>
        <begin position="262"/>
        <end position="292"/>
    </location>
</feature>
<feature type="repeat" description="PPR 8">
    <location>
        <begin position="293"/>
        <end position="327"/>
    </location>
</feature>
<feature type="repeat" description="PPR 9">
    <location>
        <begin position="330"/>
        <end position="364"/>
    </location>
</feature>
<feature type="repeat" description="PPR 10">
    <location>
        <begin position="365"/>
        <end position="395"/>
    </location>
</feature>
<feature type="repeat" description="PPR 11">
    <location>
        <begin position="396"/>
        <end position="430"/>
    </location>
</feature>
<feature type="repeat" description="PPR 12">
    <location>
        <begin position="431"/>
        <end position="465"/>
    </location>
</feature>
<feature type="repeat" description="PPR 13">
    <location>
        <begin position="466"/>
        <end position="496"/>
    </location>
</feature>
<feature type="region of interest" description="Type E motif">
    <location>
        <begin position="501"/>
        <end position="576"/>
    </location>
</feature>
<keyword id="KW-1185">Reference proteome</keyword>
<keyword id="KW-0677">Repeat</keyword>
<accession>P0C8Q5</accession>
<accession>O49657</accession>
<gene>
    <name type="primary">PCMP-E6</name>
    <name type="ordered locus">At4g22760</name>
    <name type="ORF">T12H17.150</name>
</gene>
<name>PP336_ARATH</name>
<protein>
    <recommendedName>
        <fullName>Pentatricopeptide repeat-containing protein At4g22760</fullName>
    </recommendedName>
</protein>
<dbReference type="EMBL" id="AL021635">
    <property type="protein sequence ID" value="CAA16561.1"/>
    <property type="status" value="ALT_SEQ"/>
    <property type="molecule type" value="Genomic_DNA"/>
</dbReference>
<dbReference type="EMBL" id="AL161557">
    <property type="protein sequence ID" value="CAB79231.1"/>
    <property type="status" value="ALT_SEQ"/>
    <property type="molecule type" value="Genomic_DNA"/>
</dbReference>
<dbReference type="EMBL" id="CP002687">
    <property type="protein sequence ID" value="AEE84655.1"/>
    <property type="molecule type" value="Genomic_DNA"/>
</dbReference>
<dbReference type="PIR" id="T04571">
    <property type="entry name" value="T04571"/>
</dbReference>
<dbReference type="RefSeq" id="NP_194007.2">
    <property type="nucleotide sequence ID" value="NM_118405.3"/>
</dbReference>
<dbReference type="SMR" id="P0C8Q5"/>
<dbReference type="FunCoup" id="P0C8Q5">
    <property type="interactions" value="486"/>
</dbReference>
<dbReference type="STRING" id="3702.P0C8Q5"/>
<dbReference type="PaxDb" id="3702-AT4G22760.1"/>
<dbReference type="ProteomicsDB" id="249236"/>
<dbReference type="EnsemblPlants" id="AT4G22760.1">
    <property type="protein sequence ID" value="AT4G22760.1"/>
    <property type="gene ID" value="AT4G22760"/>
</dbReference>
<dbReference type="GeneID" id="828375"/>
<dbReference type="Gramene" id="AT4G22760.1">
    <property type="protein sequence ID" value="AT4G22760.1"/>
    <property type="gene ID" value="AT4G22760"/>
</dbReference>
<dbReference type="KEGG" id="ath:AT4G22760"/>
<dbReference type="Araport" id="AT4G22760"/>
<dbReference type="TAIR" id="AT4G22760"/>
<dbReference type="eggNOG" id="KOG4197">
    <property type="taxonomic scope" value="Eukaryota"/>
</dbReference>
<dbReference type="HOGENOM" id="CLU_002706_0_6_1"/>
<dbReference type="InParanoid" id="P0C8Q5"/>
<dbReference type="OMA" id="QLIMQMP"/>
<dbReference type="OrthoDB" id="185373at2759"/>
<dbReference type="PRO" id="PR:P0C8Q5"/>
<dbReference type="Proteomes" id="UP000006548">
    <property type="component" value="Chromosome 4"/>
</dbReference>
<dbReference type="ExpressionAtlas" id="P0C8Q5">
    <property type="expression patterns" value="baseline and differential"/>
</dbReference>
<dbReference type="GO" id="GO:0003723">
    <property type="term" value="F:RNA binding"/>
    <property type="evidence" value="ECO:0007669"/>
    <property type="project" value="InterPro"/>
</dbReference>
<dbReference type="GO" id="GO:0009451">
    <property type="term" value="P:RNA modification"/>
    <property type="evidence" value="ECO:0007669"/>
    <property type="project" value="InterPro"/>
</dbReference>
<dbReference type="FunFam" id="1.25.40.10:FF:001214">
    <property type="entry name" value="Pentatricopeptide repeat-containing protein At2g20540"/>
    <property type="match status" value="1"/>
</dbReference>
<dbReference type="FunFam" id="1.25.40.10:FF:001097">
    <property type="entry name" value="Pentatricopeptide repeat-containing protein At4g22760"/>
    <property type="match status" value="1"/>
</dbReference>
<dbReference type="Gene3D" id="1.25.40.10">
    <property type="entry name" value="Tetratricopeptide repeat domain"/>
    <property type="match status" value="3"/>
</dbReference>
<dbReference type="InterPro" id="IPR046848">
    <property type="entry name" value="E_motif"/>
</dbReference>
<dbReference type="InterPro" id="IPR002885">
    <property type="entry name" value="Pentatricopeptide_rpt"/>
</dbReference>
<dbReference type="InterPro" id="IPR046960">
    <property type="entry name" value="PPR_At4g14850-like_plant"/>
</dbReference>
<dbReference type="InterPro" id="IPR011990">
    <property type="entry name" value="TPR-like_helical_dom_sf"/>
</dbReference>
<dbReference type="NCBIfam" id="TIGR00756">
    <property type="entry name" value="PPR"/>
    <property type="match status" value="9"/>
</dbReference>
<dbReference type="PANTHER" id="PTHR47926:SF545">
    <property type="entry name" value="PENTACOTRIPEPTIDE-REPEAT REGION OF PRORP DOMAIN-CONTAINING PROTEIN"/>
    <property type="match status" value="1"/>
</dbReference>
<dbReference type="PANTHER" id="PTHR47926">
    <property type="entry name" value="PENTATRICOPEPTIDE REPEAT-CONTAINING PROTEIN"/>
    <property type="match status" value="1"/>
</dbReference>
<dbReference type="Pfam" id="PF20431">
    <property type="entry name" value="E_motif"/>
    <property type="match status" value="1"/>
</dbReference>
<dbReference type="Pfam" id="PF01535">
    <property type="entry name" value="PPR"/>
    <property type="match status" value="7"/>
</dbReference>
<dbReference type="Pfam" id="PF13041">
    <property type="entry name" value="PPR_2"/>
    <property type="match status" value="2"/>
</dbReference>
<dbReference type="SUPFAM" id="SSF48452">
    <property type="entry name" value="TPR-like"/>
    <property type="match status" value="2"/>
</dbReference>
<dbReference type="PROSITE" id="PS51375">
    <property type="entry name" value="PPR"/>
    <property type="match status" value="14"/>
</dbReference>
<organism>
    <name type="scientific">Arabidopsis thaliana</name>
    <name type="common">Mouse-ear cress</name>
    <dbReference type="NCBI Taxonomy" id="3702"/>
    <lineage>
        <taxon>Eukaryota</taxon>
        <taxon>Viridiplantae</taxon>
        <taxon>Streptophyta</taxon>
        <taxon>Embryophyta</taxon>
        <taxon>Tracheophyta</taxon>
        <taxon>Spermatophyta</taxon>
        <taxon>Magnoliopsida</taxon>
        <taxon>eudicotyledons</taxon>
        <taxon>Gunneridae</taxon>
        <taxon>Pentapetalae</taxon>
        <taxon>rosids</taxon>
        <taxon>malvids</taxon>
        <taxon>Brassicales</taxon>
        <taxon>Brassicaceae</taxon>
        <taxon>Camelineae</taxon>
        <taxon>Arabidopsis</taxon>
    </lineage>
</organism>
<proteinExistence type="evidence at transcript level"/>